<organism>
    <name type="scientific">Aeromonas hydrophila subsp. hydrophila (strain ATCC 7966 / DSM 30187 / BCRC 13018 / CCUG 14551 / JCM 1027 / KCTC 2358 / NCIMB 9240 / NCTC 8049)</name>
    <dbReference type="NCBI Taxonomy" id="380703"/>
    <lineage>
        <taxon>Bacteria</taxon>
        <taxon>Pseudomonadati</taxon>
        <taxon>Pseudomonadota</taxon>
        <taxon>Gammaproteobacteria</taxon>
        <taxon>Aeromonadales</taxon>
        <taxon>Aeromonadaceae</taxon>
        <taxon>Aeromonas</taxon>
    </lineage>
</organism>
<sequence length="105" mass="11309">MAAKIRREDEVIVLTGKDKGKRGKVTQVLIAKGKVIVEGINQVKKHQKPVPALGQAGGIVTKEAPIDVSNVALFNSATGKADRVGFRIEDGKKVRFFKSTGELVK</sequence>
<reference key="1">
    <citation type="journal article" date="2006" name="J. Bacteriol.">
        <title>Genome sequence of Aeromonas hydrophila ATCC 7966T: jack of all trades.</title>
        <authorList>
            <person name="Seshadri R."/>
            <person name="Joseph S.W."/>
            <person name="Chopra A.K."/>
            <person name="Sha J."/>
            <person name="Shaw J."/>
            <person name="Graf J."/>
            <person name="Haft D.H."/>
            <person name="Wu M."/>
            <person name="Ren Q."/>
            <person name="Rosovitz M.J."/>
            <person name="Madupu R."/>
            <person name="Tallon L."/>
            <person name="Kim M."/>
            <person name="Jin S."/>
            <person name="Vuong H."/>
            <person name="Stine O.C."/>
            <person name="Ali A."/>
            <person name="Horneman A.J."/>
            <person name="Heidelberg J.F."/>
        </authorList>
    </citation>
    <scope>NUCLEOTIDE SEQUENCE [LARGE SCALE GENOMIC DNA]</scope>
    <source>
        <strain>ATCC 7966 / DSM 30187 / BCRC 13018 / CCUG 14551 / JCM 1027 / KCTC 2358 / NCIMB 9240 / NCTC 8049</strain>
    </source>
</reference>
<evidence type="ECO:0000255" key="1">
    <source>
        <dbReference type="HAMAP-Rule" id="MF_01326"/>
    </source>
</evidence>
<evidence type="ECO:0000305" key="2"/>
<name>RL24_AERHH</name>
<comment type="function">
    <text evidence="1">One of two assembly initiator proteins, it binds directly to the 5'-end of the 23S rRNA, where it nucleates assembly of the 50S subunit.</text>
</comment>
<comment type="function">
    <text evidence="1">One of the proteins that surrounds the polypeptide exit tunnel on the outside of the subunit.</text>
</comment>
<comment type="subunit">
    <text evidence="1">Part of the 50S ribosomal subunit.</text>
</comment>
<comment type="similarity">
    <text evidence="1">Belongs to the universal ribosomal protein uL24 family.</text>
</comment>
<protein>
    <recommendedName>
        <fullName evidence="1">Large ribosomal subunit protein uL24</fullName>
    </recommendedName>
    <alternativeName>
        <fullName evidence="2">50S ribosomal protein L24</fullName>
    </alternativeName>
</protein>
<accession>A0KF32</accession>
<feature type="chain" id="PRO_1000052174" description="Large ribosomal subunit protein uL24">
    <location>
        <begin position="1"/>
        <end position="105"/>
    </location>
</feature>
<keyword id="KW-1185">Reference proteome</keyword>
<keyword id="KW-0687">Ribonucleoprotein</keyword>
<keyword id="KW-0689">Ribosomal protein</keyword>
<keyword id="KW-0694">RNA-binding</keyword>
<keyword id="KW-0699">rRNA-binding</keyword>
<proteinExistence type="inferred from homology"/>
<dbReference type="EMBL" id="CP000462">
    <property type="protein sequence ID" value="ABK37026.1"/>
    <property type="molecule type" value="Genomic_DNA"/>
</dbReference>
<dbReference type="RefSeq" id="WP_005307977.1">
    <property type="nucleotide sequence ID" value="NC_008570.1"/>
</dbReference>
<dbReference type="RefSeq" id="YP_854854.1">
    <property type="nucleotide sequence ID" value="NC_008570.1"/>
</dbReference>
<dbReference type="SMR" id="A0KF32"/>
<dbReference type="STRING" id="380703.AHA_0320"/>
<dbReference type="EnsemblBacteria" id="ABK37026">
    <property type="protein sequence ID" value="ABK37026"/>
    <property type="gene ID" value="AHA_0320"/>
</dbReference>
<dbReference type="GeneID" id="97858405"/>
<dbReference type="KEGG" id="aha:AHA_0320"/>
<dbReference type="PATRIC" id="fig|380703.7.peg.309"/>
<dbReference type="eggNOG" id="COG0198">
    <property type="taxonomic scope" value="Bacteria"/>
</dbReference>
<dbReference type="HOGENOM" id="CLU_093315_2_2_6"/>
<dbReference type="OrthoDB" id="9807419at2"/>
<dbReference type="PRO" id="PR:A0KF32"/>
<dbReference type="Proteomes" id="UP000000756">
    <property type="component" value="Chromosome"/>
</dbReference>
<dbReference type="GO" id="GO:1990904">
    <property type="term" value="C:ribonucleoprotein complex"/>
    <property type="evidence" value="ECO:0007669"/>
    <property type="project" value="UniProtKB-KW"/>
</dbReference>
<dbReference type="GO" id="GO:0005840">
    <property type="term" value="C:ribosome"/>
    <property type="evidence" value="ECO:0007669"/>
    <property type="project" value="UniProtKB-KW"/>
</dbReference>
<dbReference type="GO" id="GO:0019843">
    <property type="term" value="F:rRNA binding"/>
    <property type="evidence" value="ECO:0007669"/>
    <property type="project" value="UniProtKB-UniRule"/>
</dbReference>
<dbReference type="GO" id="GO:0003735">
    <property type="term" value="F:structural constituent of ribosome"/>
    <property type="evidence" value="ECO:0007669"/>
    <property type="project" value="InterPro"/>
</dbReference>
<dbReference type="GO" id="GO:0006412">
    <property type="term" value="P:translation"/>
    <property type="evidence" value="ECO:0007669"/>
    <property type="project" value="UniProtKB-UniRule"/>
</dbReference>
<dbReference type="CDD" id="cd06089">
    <property type="entry name" value="KOW_RPL26"/>
    <property type="match status" value="1"/>
</dbReference>
<dbReference type="FunFam" id="2.30.30.30:FF:000004">
    <property type="entry name" value="50S ribosomal protein L24"/>
    <property type="match status" value="1"/>
</dbReference>
<dbReference type="Gene3D" id="2.30.30.30">
    <property type="match status" value="1"/>
</dbReference>
<dbReference type="HAMAP" id="MF_01326_B">
    <property type="entry name" value="Ribosomal_uL24_B"/>
    <property type="match status" value="1"/>
</dbReference>
<dbReference type="InterPro" id="IPR005824">
    <property type="entry name" value="KOW"/>
</dbReference>
<dbReference type="InterPro" id="IPR014722">
    <property type="entry name" value="Rib_uL2_dom2"/>
</dbReference>
<dbReference type="InterPro" id="IPR003256">
    <property type="entry name" value="Ribosomal_uL24"/>
</dbReference>
<dbReference type="InterPro" id="IPR005825">
    <property type="entry name" value="Ribosomal_uL24_CS"/>
</dbReference>
<dbReference type="InterPro" id="IPR041988">
    <property type="entry name" value="Ribosomal_uL24_KOW"/>
</dbReference>
<dbReference type="InterPro" id="IPR008991">
    <property type="entry name" value="Translation_prot_SH3-like_sf"/>
</dbReference>
<dbReference type="NCBIfam" id="TIGR01079">
    <property type="entry name" value="rplX_bact"/>
    <property type="match status" value="1"/>
</dbReference>
<dbReference type="PANTHER" id="PTHR12903">
    <property type="entry name" value="MITOCHONDRIAL RIBOSOMAL PROTEIN L24"/>
    <property type="match status" value="1"/>
</dbReference>
<dbReference type="Pfam" id="PF00467">
    <property type="entry name" value="KOW"/>
    <property type="match status" value="1"/>
</dbReference>
<dbReference type="Pfam" id="PF17136">
    <property type="entry name" value="ribosomal_L24"/>
    <property type="match status" value="1"/>
</dbReference>
<dbReference type="SUPFAM" id="SSF50104">
    <property type="entry name" value="Translation proteins SH3-like domain"/>
    <property type="match status" value="1"/>
</dbReference>
<dbReference type="PROSITE" id="PS01108">
    <property type="entry name" value="RIBOSOMAL_L24"/>
    <property type="match status" value="1"/>
</dbReference>
<gene>
    <name evidence="1" type="primary">rplX</name>
    <name type="ordered locus">AHA_0320</name>
</gene>